<comment type="function">
    <text evidence="1">Transferase that catalyzes the transfer of sulfur from thiosulfate to thiophilic acceptors such as cyanide or dithiols. May function in a CysM-independent thiosulfate assimilation pathway by catalyzing the conversion of thiosulfate to sulfite, which can then be used for L-cysteine biosynthesis.</text>
</comment>
<comment type="catalytic activity">
    <reaction evidence="1">
        <text>thiosulfate + hydrogen cyanide = thiocyanate + sulfite + 2 H(+)</text>
        <dbReference type="Rhea" id="RHEA:16881"/>
        <dbReference type="ChEBI" id="CHEBI:15378"/>
        <dbReference type="ChEBI" id="CHEBI:17359"/>
        <dbReference type="ChEBI" id="CHEBI:18022"/>
        <dbReference type="ChEBI" id="CHEBI:18407"/>
        <dbReference type="ChEBI" id="CHEBI:33542"/>
        <dbReference type="EC" id="2.8.1.1"/>
    </reaction>
</comment>
<comment type="catalytic activity">
    <reaction evidence="1">
        <text>thiosulfate + [thioredoxin]-dithiol = [thioredoxin]-disulfide + hydrogen sulfide + sulfite + 2 H(+)</text>
        <dbReference type="Rhea" id="RHEA:83859"/>
        <dbReference type="Rhea" id="RHEA-COMP:10698"/>
        <dbReference type="Rhea" id="RHEA-COMP:10700"/>
        <dbReference type="ChEBI" id="CHEBI:15378"/>
        <dbReference type="ChEBI" id="CHEBI:17359"/>
        <dbReference type="ChEBI" id="CHEBI:29919"/>
        <dbReference type="ChEBI" id="CHEBI:29950"/>
        <dbReference type="ChEBI" id="CHEBI:33542"/>
        <dbReference type="ChEBI" id="CHEBI:50058"/>
    </reaction>
</comment>
<comment type="subcellular location">
    <subcellularLocation>
        <location evidence="1">Cytoplasm</location>
    </subcellularLocation>
</comment>
<comment type="similarity">
    <text evidence="1">Belongs to the GlpE family.</text>
</comment>
<sequence length="108" mass="12067">MDLFECINVADAHQKLQEKEAVLVDIRDPQSFAMGHAVQAFHLTNDTLGAFMRDNDFDTPVMVMCYHGNSSKGAAQYLLQQGYDVVYSIDGGFEAWQRQFPAEVAYGA</sequence>
<keyword id="KW-0963">Cytoplasm</keyword>
<keyword id="KW-1185">Reference proteome</keyword>
<keyword id="KW-0808">Transferase</keyword>
<proteinExistence type="inferred from homology"/>
<gene>
    <name evidence="1" type="primary">glpE</name>
    <name type="ordered locus">SbBS512_E3807</name>
</gene>
<protein>
    <recommendedName>
        <fullName evidence="1">Thiosulfate sulfurtransferase GlpE</fullName>
        <ecNumber evidence="1">2.8.1.1</ecNumber>
    </recommendedName>
</protein>
<evidence type="ECO:0000255" key="1">
    <source>
        <dbReference type="HAMAP-Rule" id="MF_01009"/>
    </source>
</evidence>
<name>GLPE_SHIB3</name>
<dbReference type="EC" id="2.8.1.1" evidence="1"/>
<dbReference type="EMBL" id="CP001063">
    <property type="protein sequence ID" value="ACD10294.1"/>
    <property type="molecule type" value="Genomic_DNA"/>
</dbReference>
<dbReference type="RefSeq" id="WP_000362869.1">
    <property type="nucleotide sequence ID" value="NC_010658.1"/>
</dbReference>
<dbReference type="SMR" id="B2U3N3"/>
<dbReference type="STRING" id="344609.SbBS512_E3807"/>
<dbReference type="KEGG" id="sbc:SbBS512_E3807"/>
<dbReference type="HOGENOM" id="CLU_089574_14_0_6"/>
<dbReference type="Proteomes" id="UP000001030">
    <property type="component" value="Chromosome"/>
</dbReference>
<dbReference type="GO" id="GO:0005737">
    <property type="term" value="C:cytoplasm"/>
    <property type="evidence" value="ECO:0007669"/>
    <property type="project" value="UniProtKB-SubCell"/>
</dbReference>
<dbReference type="GO" id="GO:0004792">
    <property type="term" value="F:thiosulfate-cyanide sulfurtransferase activity"/>
    <property type="evidence" value="ECO:0007669"/>
    <property type="project" value="UniProtKB-UniRule"/>
</dbReference>
<dbReference type="GO" id="GO:0006071">
    <property type="term" value="P:glycerol metabolic process"/>
    <property type="evidence" value="ECO:0007669"/>
    <property type="project" value="UniProtKB-UniRule"/>
</dbReference>
<dbReference type="CDD" id="cd01444">
    <property type="entry name" value="GlpE_ST"/>
    <property type="match status" value="1"/>
</dbReference>
<dbReference type="FunFam" id="3.40.250.10:FF:000007">
    <property type="entry name" value="Thiosulfate sulfurtransferase GlpE"/>
    <property type="match status" value="1"/>
</dbReference>
<dbReference type="Gene3D" id="3.40.250.10">
    <property type="entry name" value="Rhodanese-like domain"/>
    <property type="match status" value="1"/>
</dbReference>
<dbReference type="HAMAP" id="MF_01009">
    <property type="entry name" value="Thiosulf_sulfurtr"/>
    <property type="match status" value="1"/>
</dbReference>
<dbReference type="InterPro" id="IPR050229">
    <property type="entry name" value="GlpE_sulfurtransferase"/>
</dbReference>
<dbReference type="InterPro" id="IPR001763">
    <property type="entry name" value="Rhodanese-like_dom"/>
</dbReference>
<dbReference type="InterPro" id="IPR036873">
    <property type="entry name" value="Rhodanese-like_dom_sf"/>
</dbReference>
<dbReference type="InterPro" id="IPR023695">
    <property type="entry name" value="Thiosulf_sulfurTrfase"/>
</dbReference>
<dbReference type="NCBIfam" id="NF001195">
    <property type="entry name" value="PRK00162.1"/>
    <property type="match status" value="1"/>
</dbReference>
<dbReference type="PANTHER" id="PTHR43031">
    <property type="entry name" value="FAD-DEPENDENT OXIDOREDUCTASE"/>
    <property type="match status" value="1"/>
</dbReference>
<dbReference type="PANTHER" id="PTHR43031:SF6">
    <property type="entry name" value="THIOSULFATE SULFURTRANSFERASE GLPE"/>
    <property type="match status" value="1"/>
</dbReference>
<dbReference type="Pfam" id="PF00581">
    <property type="entry name" value="Rhodanese"/>
    <property type="match status" value="1"/>
</dbReference>
<dbReference type="SMART" id="SM00450">
    <property type="entry name" value="RHOD"/>
    <property type="match status" value="1"/>
</dbReference>
<dbReference type="SUPFAM" id="SSF52821">
    <property type="entry name" value="Rhodanese/Cell cycle control phosphatase"/>
    <property type="match status" value="1"/>
</dbReference>
<dbReference type="PROSITE" id="PS50206">
    <property type="entry name" value="RHODANESE_3"/>
    <property type="match status" value="1"/>
</dbReference>
<accession>B2U3N3</accession>
<feature type="chain" id="PRO_1000190111" description="Thiosulfate sulfurtransferase GlpE">
    <location>
        <begin position="1"/>
        <end position="108"/>
    </location>
</feature>
<feature type="domain" description="Rhodanese" evidence="1">
    <location>
        <begin position="17"/>
        <end position="105"/>
    </location>
</feature>
<feature type="active site" description="Cysteine persulfide intermediate" evidence="1">
    <location>
        <position position="65"/>
    </location>
</feature>
<organism>
    <name type="scientific">Shigella boydii serotype 18 (strain CDC 3083-94 / BS512)</name>
    <dbReference type="NCBI Taxonomy" id="344609"/>
    <lineage>
        <taxon>Bacteria</taxon>
        <taxon>Pseudomonadati</taxon>
        <taxon>Pseudomonadota</taxon>
        <taxon>Gammaproteobacteria</taxon>
        <taxon>Enterobacterales</taxon>
        <taxon>Enterobacteriaceae</taxon>
        <taxon>Shigella</taxon>
    </lineage>
</organism>
<reference key="1">
    <citation type="submission" date="2008-05" db="EMBL/GenBank/DDBJ databases">
        <title>Complete sequence of Shigella boydii serotype 18 strain BS512.</title>
        <authorList>
            <person name="Rasko D.A."/>
            <person name="Rosovitz M."/>
            <person name="Maurelli A.T."/>
            <person name="Myers G."/>
            <person name="Seshadri R."/>
            <person name="Cer R."/>
            <person name="Jiang L."/>
            <person name="Ravel J."/>
            <person name="Sebastian Y."/>
        </authorList>
    </citation>
    <scope>NUCLEOTIDE SEQUENCE [LARGE SCALE GENOMIC DNA]</scope>
    <source>
        <strain>CDC 3083-94 / BS512</strain>
    </source>
</reference>